<keyword id="KW-0067">ATP-binding</keyword>
<keyword id="KW-0963">Cytoplasm</keyword>
<keyword id="KW-0227">DNA damage</keyword>
<keyword id="KW-0234">DNA repair</keyword>
<keyword id="KW-0235">DNA replication</keyword>
<keyword id="KW-0238">DNA-binding</keyword>
<keyword id="KW-0547">Nucleotide-binding</keyword>
<keyword id="KW-1185">Reference proteome</keyword>
<keyword id="KW-0742">SOS response</keyword>
<reference key="1">
    <citation type="journal article" date="2005" name="J. Bacteriol.">
        <title>Insights on evolution of virulence and resistance from the complete genome analysis of an early methicillin-resistant Staphylococcus aureus strain and a biofilm-producing methicillin-resistant Staphylococcus epidermidis strain.</title>
        <authorList>
            <person name="Gill S.R."/>
            <person name="Fouts D.E."/>
            <person name="Archer G.L."/>
            <person name="Mongodin E.F."/>
            <person name="DeBoy R.T."/>
            <person name="Ravel J."/>
            <person name="Paulsen I.T."/>
            <person name="Kolonay J.F."/>
            <person name="Brinkac L.M."/>
            <person name="Beanan M.J."/>
            <person name="Dodson R.J."/>
            <person name="Daugherty S.C."/>
            <person name="Madupu R."/>
            <person name="Angiuoli S.V."/>
            <person name="Durkin A.S."/>
            <person name="Haft D.H."/>
            <person name="Vamathevan J.J."/>
            <person name="Khouri H."/>
            <person name="Utterback T.R."/>
            <person name="Lee C."/>
            <person name="Dimitrov G."/>
            <person name="Jiang L."/>
            <person name="Qin H."/>
            <person name="Weidman J."/>
            <person name="Tran K."/>
            <person name="Kang K.H."/>
            <person name="Hance I.R."/>
            <person name="Nelson K.E."/>
            <person name="Fraser C.M."/>
        </authorList>
    </citation>
    <scope>NUCLEOTIDE SEQUENCE [LARGE SCALE GENOMIC DNA]</scope>
    <source>
        <strain>ATCC 35984 / DSM 28319 / BCRC 17069 / CCUG 31568 / BM 3577 / RP62A</strain>
    </source>
</reference>
<accession>Q5HK02</accession>
<proteinExistence type="inferred from homology"/>
<sequence length="371" mass="42608">MKLNTLQLENYRNYEQVTLDCHPEVNILIGENAQGKTNLLESIYTLALAKSHRTSNDKELIRFKSDYAKIEGELSYRHGTMPLTMFITKKGKQVKVNHLEQSRLTQYIGHLNVVLFAPEDLNIVKGSPQIRRRFIDMELGQISAVYLNDLAQYQRILKQKNNYLKQLQIGQKTDTTMLEVLNQQFAEYALKVTLRREHFIKELETLAQPIHAGITNDRETLTLDYVPSLKLSNYEANQSELIEEVLALLNDNLQREKERGVCLYGPHRDDLSFNVNGMDAQTYGSQGQQRTTALSIKLAEIELMNIEVGEYPILLLDDVLSELDDSRQTHLLSTIQHKVQTFVTTTSVEGIDHEIMNNAKLYRISQGEILK</sequence>
<organism>
    <name type="scientific">Staphylococcus epidermidis (strain ATCC 35984 / DSM 28319 / BCRC 17069 / CCUG 31568 / BM 3577 / RP62A)</name>
    <dbReference type="NCBI Taxonomy" id="176279"/>
    <lineage>
        <taxon>Bacteria</taxon>
        <taxon>Bacillati</taxon>
        <taxon>Bacillota</taxon>
        <taxon>Bacilli</taxon>
        <taxon>Bacillales</taxon>
        <taxon>Staphylococcaceae</taxon>
        <taxon>Staphylococcus</taxon>
    </lineage>
</organism>
<protein>
    <recommendedName>
        <fullName evidence="1">DNA replication and repair protein RecF</fullName>
    </recommendedName>
</protein>
<feature type="chain" id="PRO_0000196464" description="DNA replication and repair protein RecF">
    <location>
        <begin position="1"/>
        <end position="371"/>
    </location>
</feature>
<feature type="binding site" evidence="1">
    <location>
        <begin position="30"/>
        <end position="37"/>
    </location>
    <ligand>
        <name>ATP</name>
        <dbReference type="ChEBI" id="CHEBI:30616"/>
    </ligand>
</feature>
<evidence type="ECO:0000255" key="1">
    <source>
        <dbReference type="HAMAP-Rule" id="MF_00365"/>
    </source>
</evidence>
<gene>
    <name evidence="1" type="primary">recF</name>
    <name type="ordered locus">SERP2550</name>
</gene>
<name>RECF_STAEQ</name>
<comment type="function">
    <text evidence="1">The RecF protein is involved in DNA metabolism; it is required for DNA replication and normal SOS inducibility. RecF binds preferentially to single-stranded, linear DNA. It also seems to bind ATP.</text>
</comment>
<comment type="subcellular location">
    <subcellularLocation>
        <location evidence="1">Cytoplasm</location>
    </subcellularLocation>
</comment>
<comment type="similarity">
    <text evidence="1">Belongs to the RecF family.</text>
</comment>
<dbReference type="EMBL" id="CP000029">
    <property type="protein sequence ID" value="AAW53374.1"/>
    <property type="molecule type" value="Genomic_DNA"/>
</dbReference>
<dbReference type="RefSeq" id="WP_002437307.1">
    <property type="nucleotide sequence ID" value="NC_002976.3"/>
</dbReference>
<dbReference type="SMR" id="Q5HK02"/>
<dbReference type="STRING" id="176279.SERP2550"/>
<dbReference type="GeneID" id="50017418"/>
<dbReference type="KEGG" id="ser:SERP2550"/>
<dbReference type="eggNOG" id="COG1195">
    <property type="taxonomic scope" value="Bacteria"/>
</dbReference>
<dbReference type="HOGENOM" id="CLU_040267_0_1_9"/>
<dbReference type="Proteomes" id="UP000000531">
    <property type="component" value="Chromosome"/>
</dbReference>
<dbReference type="GO" id="GO:0005737">
    <property type="term" value="C:cytoplasm"/>
    <property type="evidence" value="ECO:0007669"/>
    <property type="project" value="UniProtKB-SubCell"/>
</dbReference>
<dbReference type="GO" id="GO:0005524">
    <property type="term" value="F:ATP binding"/>
    <property type="evidence" value="ECO:0007669"/>
    <property type="project" value="UniProtKB-UniRule"/>
</dbReference>
<dbReference type="GO" id="GO:0003697">
    <property type="term" value="F:single-stranded DNA binding"/>
    <property type="evidence" value="ECO:0007669"/>
    <property type="project" value="UniProtKB-UniRule"/>
</dbReference>
<dbReference type="GO" id="GO:0006260">
    <property type="term" value="P:DNA replication"/>
    <property type="evidence" value="ECO:0007669"/>
    <property type="project" value="UniProtKB-UniRule"/>
</dbReference>
<dbReference type="GO" id="GO:0000731">
    <property type="term" value="P:DNA synthesis involved in DNA repair"/>
    <property type="evidence" value="ECO:0007669"/>
    <property type="project" value="TreeGrafter"/>
</dbReference>
<dbReference type="GO" id="GO:0006302">
    <property type="term" value="P:double-strand break repair"/>
    <property type="evidence" value="ECO:0007669"/>
    <property type="project" value="TreeGrafter"/>
</dbReference>
<dbReference type="GO" id="GO:0009432">
    <property type="term" value="P:SOS response"/>
    <property type="evidence" value="ECO:0007669"/>
    <property type="project" value="UniProtKB-UniRule"/>
</dbReference>
<dbReference type="CDD" id="cd03242">
    <property type="entry name" value="ABC_RecF"/>
    <property type="match status" value="1"/>
</dbReference>
<dbReference type="FunFam" id="1.20.1050.90:FF:000002">
    <property type="entry name" value="DNA replication and repair protein RecF"/>
    <property type="match status" value="1"/>
</dbReference>
<dbReference type="Gene3D" id="3.40.50.300">
    <property type="entry name" value="P-loop containing nucleotide triphosphate hydrolases"/>
    <property type="match status" value="1"/>
</dbReference>
<dbReference type="Gene3D" id="1.20.1050.90">
    <property type="entry name" value="RecF/RecN/SMC, N-terminal domain"/>
    <property type="match status" value="1"/>
</dbReference>
<dbReference type="HAMAP" id="MF_00365">
    <property type="entry name" value="RecF"/>
    <property type="match status" value="1"/>
</dbReference>
<dbReference type="InterPro" id="IPR001238">
    <property type="entry name" value="DNA-binding_RecF"/>
</dbReference>
<dbReference type="InterPro" id="IPR018078">
    <property type="entry name" value="DNA-binding_RecF_CS"/>
</dbReference>
<dbReference type="InterPro" id="IPR027417">
    <property type="entry name" value="P-loop_NTPase"/>
</dbReference>
<dbReference type="InterPro" id="IPR003395">
    <property type="entry name" value="RecF/RecN/SMC_N"/>
</dbReference>
<dbReference type="InterPro" id="IPR042174">
    <property type="entry name" value="RecF_2"/>
</dbReference>
<dbReference type="NCBIfam" id="TIGR00611">
    <property type="entry name" value="recf"/>
    <property type="match status" value="1"/>
</dbReference>
<dbReference type="PANTHER" id="PTHR32182">
    <property type="entry name" value="DNA REPLICATION AND REPAIR PROTEIN RECF"/>
    <property type="match status" value="1"/>
</dbReference>
<dbReference type="PANTHER" id="PTHR32182:SF0">
    <property type="entry name" value="DNA REPLICATION AND REPAIR PROTEIN RECF"/>
    <property type="match status" value="1"/>
</dbReference>
<dbReference type="Pfam" id="PF02463">
    <property type="entry name" value="SMC_N"/>
    <property type="match status" value="1"/>
</dbReference>
<dbReference type="SUPFAM" id="SSF52540">
    <property type="entry name" value="P-loop containing nucleoside triphosphate hydrolases"/>
    <property type="match status" value="1"/>
</dbReference>
<dbReference type="PROSITE" id="PS00617">
    <property type="entry name" value="RECF_1"/>
    <property type="match status" value="1"/>
</dbReference>
<dbReference type="PROSITE" id="PS00618">
    <property type="entry name" value="RECF_2"/>
    <property type="match status" value="1"/>
</dbReference>